<name>LDCA_ECOLI</name>
<gene>
    <name type="primary">ldcA</name>
    <name type="synonym">ycgQ</name>
    <name type="ordered locus">b1192</name>
    <name type="ordered locus">JW1181</name>
</gene>
<evidence type="ECO:0000250" key="1"/>
<evidence type="ECO:0000269" key="2">
    <source>
    </source>
</evidence>
<evidence type="ECO:0000269" key="3">
    <source>
    </source>
</evidence>
<evidence type="ECO:0000305" key="4"/>
<evidence type="ECO:0007829" key="5">
    <source>
        <dbReference type="PDB" id="5Z01"/>
    </source>
</evidence>
<proteinExistence type="evidence at protein level"/>
<keyword id="KW-0002">3D-structure</keyword>
<keyword id="KW-0121">Carboxypeptidase</keyword>
<keyword id="KW-0133">Cell shape</keyword>
<keyword id="KW-0961">Cell wall biogenesis/degradation</keyword>
<keyword id="KW-0963">Cytoplasm</keyword>
<keyword id="KW-0378">Hydrolase</keyword>
<keyword id="KW-0573">Peptidoglycan synthesis</keyword>
<keyword id="KW-0645">Protease</keyword>
<keyword id="KW-1185">Reference proteome</keyword>
<keyword id="KW-0720">Serine protease</keyword>
<comment type="function">
    <text evidence="2 3">Releases the terminal D-alanine residue from the cytoplasmic tetrapeptide recycling product L-Ala-gamma-D-Glu-meso-Dap-D-Ala. To a lesser extent, can also cleave D-Ala from murein derivatives containing the tetrapeptide, i.e. MurNAc-tetrapeptide, UDP-MurNAc-tetrapeptide, GlcNAc-MurNAc-tetrapeptide, and GlcNAc-anhMurNAc-tetrapeptide. Does not act on murein sacculi or cross-linked muropeptides. The tripeptides produced by the LcdA reaction can then be reused as peptidoglycan building blocks; LcdA is thereby involved in murein recycling. Is also essential for viability during stationary phase.</text>
</comment>
<comment type="catalytic activity">
    <reaction evidence="2">
        <text>N-acetyl-D-glucosaminyl-N-acetylmuramoyl-L-alanyl-meso-2,6-diaminoheptanedioyl-D-alanine + H2O = N-acetyl-D-glucosaminyl-N-acetylmuramoyl-L-alanyl-meso-2,6-diaminoheptanedioate + D-alanine</text>
        <dbReference type="Rhea" id="RHEA:48688"/>
        <dbReference type="ChEBI" id="CHEBI:15377"/>
        <dbReference type="ChEBI" id="CHEBI:57416"/>
        <dbReference type="ChEBI" id="CHEBI:233808"/>
        <dbReference type="ChEBI" id="CHEBI:233809"/>
        <dbReference type="EC" id="3.4.17.13"/>
    </reaction>
</comment>
<comment type="activity regulation">
    <text evidence="2">Inhibited by beta-lactams containing a D-amino acid side chain.</text>
</comment>
<comment type="pathway">
    <text evidence="2">Cell wall biogenesis; peptidoglycan recycling.</text>
</comment>
<comment type="subcellular location">
    <subcellularLocation>
        <location evidence="2">Cytoplasm</location>
    </subcellularLocation>
</comment>
<comment type="disruption phenotype">
    <text evidence="2">Bacteriolysis during the stationary growth phase. Cells lacking this gene also accumulate UDP-MurNAc-tetrapeptide, an unusual compound that normally is not present at significant levels in E.coli cells.</text>
</comment>
<comment type="similarity">
    <text evidence="4">Belongs to the peptidase S66 family.</text>
</comment>
<feature type="chain" id="PRO_0000172837" description="Murein tetrapeptide carboxypeptidase">
    <location>
        <begin position="1"/>
        <end position="304"/>
    </location>
</feature>
<feature type="active site" description="Nucleophile" evidence="1">
    <location>
        <position position="106"/>
    </location>
</feature>
<feature type="active site" description="Charge relay system" evidence="1">
    <location>
        <position position="200"/>
    </location>
</feature>
<feature type="active site" description="Charge relay system" evidence="1">
    <location>
        <position position="270"/>
    </location>
</feature>
<feature type="strand" evidence="5">
    <location>
        <begin position="3"/>
        <end position="7"/>
    </location>
</feature>
<feature type="helix" evidence="5">
    <location>
        <begin position="16"/>
        <end position="28"/>
    </location>
</feature>
<feature type="strand" evidence="5">
    <location>
        <begin position="32"/>
        <end position="34"/>
    </location>
</feature>
<feature type="helix" evidence="5">
    <location>
        <begin position="36"/>
        <end position="39"/>
    </location>
</feature>
<feature type="strand" evidence="5">
    <location>
        <begin position="46"/>
        <end position="48"/>
    </location>
</feature>
<feature type="helix" evidence="5">
    <location>
        <begin position="50"/>
        <end position="58"/>
    </location>
</feature>
<feature type="helix" evidence="5">
    <location>
        <begin position="59"/>
        <end position="62"/>
    </location>
</feature>
<feature type="strand" evidence="5">
    <location>
        <begin position="68"/>
        <end position="72"/>
    </location>
</feature>
<feature type="helix" evidence="5">
    <location>
        <begin position="79"/>
        <end position="82"/>
    </location>
</feature>
<feature type="turn" evidence="5">
    <location>
        <begin position="83"/>
        <end position="85"/>
    </location>
</feature>
<feature type="helix" evidence="5">
    <location>
        <begin position="88"/>
        <end position="95"/>
    </location>
</feature>
<feature type="strand" evidence="5">
    <location>
        <begin position="101"/>
        <end position="104"/>
    </location>
</feature>
<feature type="helix" evidence="5">
    <location>
        <begin position="106"/>
        <end position="108"/>
    </location>
</feature>
<feature type="helix" evidence="5">
    <location>
        <begin position="109"/>
        <end position="119"/>
    </location>
</feature>
<feature type="strand" evidence="5">
    <location>
        <begin position="123"/>
        <end position="125"/>
    </location>
</feature>
<feature type="helix" evidence="5">
    <location>
        <begin position="129"/>
        <end position="133"/>
    </location>
</feature>
<feature type="strand" evidence="5">
    <location>
        <begin position="135"/>
        <end position="137"/>
    </location>
</feature>
<feature type="helix" evidence="5">
    <location>
        <begin position="140"/>
        <end position="151"/>
    </location>
</feature>
<feature type="strand" evidence="5">
    <location>
        <begin position="153"/>
        <end position="159"/>
    </location>
</feature>
<feature type="strand" evidence="5">
    <location>
        <begin position="166"/>
        <end position="176"/>
    </location>
</feature>
<feature type="helix" evidence="5">
    <location>
        <begin position="177"/>
        <end position="181"/>
    </location>
</feature>
<feature type="turn" evidence="5">
    <location>
        <begin position="182"/>
        <end position="185"/>
    </location>
</feature>
<feature type="strand" evidence="5">
    <location>
        <begin position="196"/>
        <end position="203"/>
    </location>
</feature>
<feature type="helix" evidence="5">
    <location>
        <begin position="206"/>
        <end position="218"/>
    </location>
</feature>
<feature type="turn" evidence="5">
    <location>
        <begin position="219"/>
        <end position="221"/>
    </location>
</feature>
<feature type="helix" evidence="5">
    <location>
        <begin position="222"/>
        <end position="224"/>
    </location>
</feature>
<feature type="strand" evidence="5">
    <location>
        <begin position="225"/>
        <end position="235"/>
    </location>
</feature>
<feature type="helix" evidence="5">
    <location>
        <begin position="240"/>
        <end position="242"/>
    </location>
</feature>
<feature type="helix" evidence="5">
    <location>
        <begin position="247"/>
        <end position="255"/>
    </location>
</feature>
<feature type="strand" evidence="5">
    <location>
        <begin position="262"/>
        <end position="264"/>
    </location>
</feature>
<feature type="strand" evidence="5">
    <location>
        <begin position="269"/>
        <end position="272"/>
    </location>
</feature>
<feature type="strand" evidence="5">
    <location>
        <begin position="277"/>
        <end position="279"/>
    </location>
</feature>
<feature type="strand" evidence="5">
    <location>
        <begin position="281"/>
        <end position="288"/>
    </location>
</feature>
<feature type="strand" evidence="5">
    <location>
        <begin position="291"/>
        <end position="297"/>
    </location>
</feature>
<accession>P76008</accession>
<accession>O87499</accession>
<sequence length="304" mass="33567">MSLFHLIAPSGYCIKQHAALRGIQRLTDAGHQVNNVEVIARRCERFAGTETERLEDLNSLARLTTPNTIVLAVRGGYGASRLLADIDWQALVARQQHDPLLICGHSDFTAIQCGLLAHGNVITFSGPMLVANFGADELNAFTEHHFWLALRNETFTIEWQGEGPTCRAEGTLWGGNLAMLISLIGTPWMPKIENGILVLEDINEHPFRVERMLLQLYHAGILPRQKAIILGSFSGSTPNDYDAGYNLESVYAFLRSRLSIPLITGLDFGHEQRTVTLPLGAHAILNNTREGTQLTISGHPVLKM</sequence>
<dbReference type="EC" id="3.4.17.13"/>
<dbReference type="EMBL" id="U00096">
    <property type="protein sequence ID" value="AAC74276.1"/>
    <property type="molecule type" value="Genomic_DNA"/>
</dbReference>
<dbReference type="EMBL" id="AP009048">
    <property type="protein sequence ID" value="BAA36050.1"/>
    <property type="molecule type" value="Genomic_DNA"/>
</dbReference>
<dbReference type="PIR" id="E64865">
    <property type="entry name" value="E64865"/>
</dbReference>
<dbReference type="RefSeq" id="NP_415710.1">
    <property type="nucleotide sequence ID" value="NC_000913.3"/>
</dbReference>
<dbReference type="RefSeq" id="WP_000051560.1">
    <property type="nucleotide sequence ID" value="NZ_SSZK01000010.1"/>
</dbReference>
<dbReference type="PDB" id="5Z01">
    <property type="method" value="X-ray"/>
    <property type="resolution" value="1.75 A"/>
    <property type="chains" value="A=1-304"/>
</dbReference>
<dbReference type="PDB" id="5Z03">
    <property type="method" value="X-ray"/>
    <property type="resolution" value="1.75 A"/>
    <property type="chains" value="A/B=1-304"/>
</dbReference>
<dbReference type="PDBsum" id="5Z01"/>
<dbReference type="PDBsum" id="5Z03"/>
<dbReference type="SMR" id="P76008"/>
<dbReference type="BioGRID" id="4259643">
    <property type="interactions" value="326"/>
</dbReference>
<dbReference type="BioGRID" id="850123">
    <property type="interactions" value="1"/>
</dbReference>
<dbReference type="DIP" id="DIP-10085N"/>
<dbReference type="FunCoup" id="P76008">
    <property type="interactions" value="332"/>
</dbReference>
<dbReference type="IntAct" id="P76008">
    <property type="interactions" value="4"/>
</dbReference>
<dbReference type="STRING" id="511145.b1192"/>
<dbReference type="MEROPS" id="S66.002"/>
<dbReference type="jPOST" id="P76008"/>
<dbReference type="PaxDb" id="511145-b1192"/>
<dbReference type="EnsemblBacteria" id="AAC74276">
    <property type="protein sequence ID" value="AAC74276"/>
    <property type="gene ID" value="b1192"/>
</dbReference>
<dbReference type="GeneID" id="945756"/>
<dbReference type="KEGG" id="ecj:JW1181"/>
<dbReference type="KEGG" id="eco:b1192"/>
<dbReference type="KEGG" id="ecoc:C3026_07015"/>
<dbReference type="PATRIC" id="fig|1411691.4.peg.1094"/>
<dbReference type="EchoBASE" id="EB3657"/>
<dbReference type="eggNOG" id="COG1619">
    <property type="taxonomic scope" value="Bacteria"/>
</dbReference>
<dbReference type="HOGENOM" id="CLU_034346_0_1_6"/>
<dbReference type="InParanoid" id="P76008"/>
<dbReference type="OMA" id="MLTQWRL"/>
<dbReference type="OrthoDB" id="9807329at2"/>
<dbReference type="PhylomeDB" id="P76008"/>
<dbReference type="BioCyc" id="EcoCyc:G6621-MONOMER"/>
<dbReference type="BioCyc" id="MetaCyc:G6621-MONOMER"/>
<dbReference type="UniPathway" id="UPA00544"/>
<dbReference type="PRO" id="PR:P76008"/>
<dbReference type="Proteomes" id="UP000000625">
    <property type="component" value="Chromosome"/>
</dbReference>
<dbReference type="GO" id="GO:0005829">
    <property type="term" value="C:cytosol"/>
    <property type="evidence" value="ECO:0000314"/>
    <property type="project" value="EcoCyc"/>
</dbReference>
<dbReference type="GO" id="GO:0004180">
    <property type="term" value="F:carboxypeptidase activity"/>
    <property type="evidence" value="ECO:0000314"/>
    <property type="project" value="EcoCyc"/>
</dbReference>
<dbReference type="GO" id="GO:0106415">
    <property type="term" value="F:muramoyltetrapeptide carboxypeptidase activity"/>
    <property type="evidence" value="ECO:0000314"/>
    <property type="project" value="EcoCyc"/>
</dbReference>
<dbReference type="GO" id="GO:0061787">
    <property type="term" value="F:peptidoglycan cross-bridge peptide endopeptidase activity"/>
    <property type="evidence" value="ECO:0000314"/>
    <property type="project" value="EcoCyc"/>
</dbReference>
<dbReference type="GO" id="GO:0042803">
    <property type="term" value="F:protein homodimerization activity"/>
    <property type="evidence" value="ECO:0000314"/>
    <property type="project" value="EcoCyc"/>
</dbReference>
<dbReference type="GO" id="GO:0008236">
    <property type="term" value="F:serine-type peptidase activity"/>
    <property type="evidence" value="ECO:0007669"/>
    <property type="project" value="UniProtKB-KW"/>
</dbReference>
<dbReference type="GO" id="GO:0071555">
    <property type="term" value="P:cell wall organization"/>
    <property type="evidence" value="ECO:0007669"/>
    <property type="project" value="UniProtKB-KW"/>
</dbReference>
<dbReference type="GO" id="GO:0009252">
    <property type="term" value="P:peptidoglycan biosynthetic process"/>
    <property type="evidence" value="ECO:0007669"/>
    <property type="project" value="UniProtKB-KW"/>
</dbReference>
<dbReference type="GO" id="GO:0009254">
    <property type="term" value="P:peptidoglycan turnover"/>
    <property type="evidence" value="ECO:0000314"/>
    <property type="project" value="EcoCyc"/>
</dbReference>
<dbReference type="GO" id="GO:0006508">
    <property type="term" value="P:proteolysis"/>
    <property type="evidence" value="ECO:0007669"/>
    <property type="project" value="UniProtKB-KW"/>
</dbReference>
<dbReference type="GO" id="GO:0008360">
    <property type="term" value="P:regulation of cell shape"/>
    <property type="evidence" value="ECO:0007669"/>
    <property type="project" value="UniProtKB-KW"/>
</dbReference>
<dbReference type="CDD" id="cd07025">
    <property type="entry name" value="Peptidase_S66"/>
    <property type="match status" value="1"/>
</dbReference>
<dbReference type="FunFam" id="3.40.50.10740:FF:000001">
    <property type="entry name" value="Murein tetrapeptide carboxypeptidase"/>
    <property type="match status" value="1"/>
</dbReference>
<dbReference type="FunFam" id="3.50.30.60:FF:000001">
    <property type="entry name" value="Murein tetrapeptide carboxypeptidase"/>
    <property type="match status" value="1"/>
</dbReference>
<dbReference type="Gene3D" id="3.40.50.10740">
    <property type="entry name" value="Class I glutamine amidotransferase-like"/>
    <property type="match status" value="1"/>
</dbReference>
<dbReference type="Gene3D" id="3.50.30.60">
    <property type="entry name" value="LD-carboxypeptidase A C-terminal domain-like"/>
    <property type="match status" value="1"/>
</dbReference>
<dbReference type="InterPro" id="IPR027461">
    <property type="entry name" value="Carboxypeptidase_A_C_sf"/>
</dbReference>
<dbReference type="InterPro" id="IPR029062">
    <property type="entry name" value="Class_I_gatase-like"/>
</dbReference>
<dbReference type="InterPro" id="IPR027478">
    <property type="entry name" value="LdcA_N"/>
</dbReference>
<dbReference type="InterPro" id="IPR040449">
    <property type="entry name" value="Peptidase_S66_N"/>
</dbReference>
<dbReference type="InterPro" id="IPR040921">
    <property type="entry name" value="Peptidase_S66C"/>
</dbReference>
<dbReference type="InterPro" id="IPR003507">
    <property type="entry name" value="S66_fam"/>
</dbReference>
<dbReference type="NCBIfam" id="NF008424">
    <property type="entry name" value="PRK11253.1"/>
    <property type="match status" value="1"/>
</dbReference>
<dbReference type="PANTHER" id="PTHR30237">
    <property type="entry name" value="MURAMOYLTETRAPEPTIDE CARBOXYPEPTIDASE"/>
    <property type="match status" value="1"/>
</dbReference>
<dbReference type="PANTHER" id="PTHR30237:SF2">
    <property type="entry name" value="MUREIN TETRAPEPTIDE CARBOXYPEPTIDASE"/>
    <property type="match status" value="1"/>
</dbReference>
<dbReference type="Pfam" id="PF02016">
    <property type="entry name" value="Peptidase_S66"/>
    <property type="match status" value="1"/>
</dbReference>
<dbReference type="Pfam" id="PF17676">
    <property type="entry name" value="Peptidase_S66C"/>
    <property type="match status" value="1"/>
</dbReference>
<dbReference type="PIRSF" id="PIRSF028757">
    <property type="entry name" value="LD-carboxypeptidase"/>
    <property type="match status" value="1"/>
</dbReference>
<dbReference type="SUPFAM" id="SSF52317">
    <property type="entry name" value="Class I glutamine amidotransferase-like"/>
    <property type="match status" value="1"/>
</dbReference>
<dbReference type="SUPFAM" id="SSF141986">
    <property type="entry name" value="LD-carboxypeptidase A C-terminal domain-like"/>
    <property type="match status" value="1"/>
</dbReference>
<organism>
    <name type="scientific">Escherichia coli (strain K12)</name>
    <dbReference type="NCBI Taxonomy" id="83333"/>
    <lineage>
        <taxon>Bacteria</taxon>
        <taxon>Pseudomonadati</taxon>
        <taxon>Pseudomonadota</taxon>
        <taxon>Gammaproteobacteria</taxon>
        <taxon>Enterobacterales</taxon>
        <taxon>Enterobacteriaceae</taxon>
        <taxon>Escherichia</taxon>
    </lineage>
</organism>
<reference key="1">
    <citation type="journal article" date="1999" name="EMBO J.">
        <title>A defect in cell wall recycling triggers autolysis during the stationary growth phase of Escherichia coli.</title>
        <authorList>
            <person name="Templin M.F."/>
            <person name="Ursinus A."/>
            <person name="Hoeltje J.-V."/>
        </authorList>
    </citation>
    <scope>NUCLEOTIDE SEQUENCE [GENOMIC DNA]</scope>
    <scope>FUNCTION IN MUREIN RECYCLING</scope>
    <scope>CATALYTIC ACTIVITY</scope>
    <scope>SUBSTRATE SPECIFICITY</scope>
    <scope>ACTIVITY REGULATION</scope>
    <scope>PATHWAY</scope>
    <scope>DISRUPTION PHENOTYPE</scope>
    <scope>SUBCELLULAR LOCATION</scope>
    <source>
        <strain>K12 / W3110 / ATCC 27325 / DSM 5911</strain>
    </source>
</reference>
<reference key="2">
    <citation type="journal article" date="1996" name="DNA Res.">
        <title>A 718-kb DNA sequence of the Escherichia coli K-12 genome corresponding to the 12.7-28.0 min region on the linkage map.</title>
        <authorList>
            <person name="Oshima T."/>
            <person name="Aiba H."/>
            <person name="Baba T."/>
            <person name="Fujita K."/>
            <person name="Hayashi K."/>
            <person name="Honjo A."/>
            <person name="Ikemoto K."/>
            <person name="Inada T."/>
            <person name="Itoh T."/>
            <person name="Kajihara M."/>
            <person name="Kanai K."/>
            <person name="Kashimoto K."/>
            <person name="Kimura S."/>
            <person name="Kitagawa M."/>
            <person name="Makino K."/>
            <person name="Masuda S."/>
            <person name="Miki T."/>
            <person name="Mizobuchi K."/>
            <person name="Mori H."/>
            <person name="Motomura K."/>
            <person name="Nakamura Y."/>
            <person name="Nashimoto H."/>
            <person name="Nishio Y."/>
            <person name="Saito N."/>
            <person name="Sampei G."/>
            <person name="Seki Y."/>
            <person name="Tagami H."/>
            <person name="Takemoto K."/>
            <person name="Wada C."/>
            <person name="Yamamoto Y."/>
            <person name="Yano M."/>
            <person name="Horiuchi T."/>
        </authorList>
    </citation>
    <scope>NUCLEOTIDE SEQUENCE [LARGE SCALE GENOMIC DNA]</scope>
    <source>
        <strain>K12 / W3110 / ATCC 27325 / DSM 5911</strain>
    </source>
</reference>
<reference key="3">
    <citation type="journal article" date="1997" name="Science">
        <title>The complete genome sequence of Escherichia coli K-12.</title>
        <authorList>
            <person name="Blattner F.R."/>
            <person name="Plunkett G. III"/>
            <person name="Bloch C.A."/>
            <person name="Perna N.T."/>
            <person name="Burland V."/>
            <person name="Riley M."/>
            <person name="Collado-Vides J."/>
            <person name="Glasner J.D."/>
            <person name="Rode C.K."/>
            <person name="Mayhew G.F."/>
            <person name="Gregor J."/>
            <person name="Davis N.W."/>
            <person name="Kirkpatrick H.A."/>
            <person name="Goeden M.A."/>
            <person name="Rose D.J."/>
            <person name="Mau B."/>
            <person name="Shao Y."/>
        </authorList>
    </citation>
    <scope>NUCLEOTIDE SEQUENCE [LARGE SCALE GENOMIC DNA]</scope>
    <source>
        <strain>K12 / MG1655 / ATCC 47076</strain>
    </source>
</reference>
<reference key="4">
    <citation type="journal article" date="2006" name="Mol. Syst. Biol.">
        <title>Highly accurate genome sequences of Escherichia coli K-12 strains MG1655 and W3110.</title>
        <authorList>
            <person name="Hayashi K."/>
            <person name="Morooka N."/>
            <person name="Yamamoto Y."/>
            <person name="Fujita K."/>
            <person name="Isono K."/>
            <person name="Choi S."/>
            <person name="Ohtsubo E."/>
            <person name="Baba T."/>
            <person name="Wanner B.L."/>
            <person name="Mori H."/>
            <person name="Horiuchi T."/>
        </authorList>
    </citation>
    <scope>NUCLEOTIDE SEQUENCE [LARGE SCALE GENOMIC DNA]</scope>
    <source>
        <strain>K12 / W3110 / ATCC 27325 / DSM 5911</strain>
    </source>
</reference>
<reference key="5">
    <citation type="journal article" date="2008" name="Microbiol. Mol. Biol. Rev.">
        <title>How bacteria consume their own exoskeletons (turnover and recycling of cell wall peptidoglycan).</title>
        <authorList>
            <person name="Park J.T."/>
            <person name="Uehara T."/>
        </authorList>
    </citation>
    <scope>FUNCTION IN PEPTIDOGLYCAN RECYCLING</scope>
    <scope>REVIEW</scope>
</reference>
<protein>
    <recommendedName>
        <fullName>Murein tetrapeptide carboxypeptidase</fullName>
        <ecNumber>3.4.17.13</ecNumber>
    </recommendedName>
    <alternativeName>
        <fullName>LD-carboxypeptidase A</fullName>
    </alternativeName>
    <alternativeName>
        <fullName>Muramoyltetrapeptide carboxypeptidase</fullName>
    </alternativeName>
</protein>